<comment type="function">
    <text evidence="2">Probable cellulase (PubMed:20826214). Can hydrolyze barley beta-glucan in vitro (PubMed:20826214). Could be important for the survival of M.tuberculosis in the environment, perhaps in amoebal hosts (PubMed:20826214).</text>
</comment>
<comment type="similarity">
    <text evidence="4">Belongs to the glycosyl hydrolase 12 (cellulase H) family.</text>
</comment>
<keyword id="KW-0119">Carbohydrate metabolism</keyword>
<keyword id="KW-0326">Glycosidase</keyword>
<keyword id="KW-0378">Hydrolase</keyword>
<keyword id="KW-0624">Polysaccharide degradation</keyword>
<keyword id="KW-1185">Reference proteome</keyword>
<name>CL12B_MYCTU</name>
<proteinExistence type="evidence at protein level"/>
<evidence type="ECO:0000250" key="1">
    <source>
        <dbReference type="UniProtKB" id="G4ZHR2"/>
    </source>
</evidence>
<evidence type="ECO:0000269" key="2">
    <source>
    </source>
</evidence>
<evidence type="ECO:0000303" key="3">
    <source>
    </source>
</evidence>
<evidence type="ECO:0000305" key="4"/>
<evidence type="ECO:0000305" key="5">
    <source>
    </source>
</evidence>
<evidence type="ECO:0000312" key="6">
    <source>
        <dbReference type="EMBL" id="CCP43843.1"/>
    </source>
</evidence>
<sequence>MGTNLPTEVGQILSAPTSIDYNYPTTGVWDASYDICLDSTPKTTGVNQQEIMIWFNHQGSIQPVGSPVGNTTIEGKNFVVWDGSNGMNNAMAYVATEPIEVWSFDVMSFVDHTATMEPITDSWYLTSIRAGLEPWSDGVGLGVDSFSAKVN</sequence>
<gene>
    <name evidence="3" type="primary">Cel12b</name>
    <name evidence="6" type="synonym">celA2b</name>
    <name evidence="6" type="ordered locus">Rv1090</name>
</gene>
<feature type="chain" id="PRO_0000460405" description="Probable cellulase Cel12b">
    <location>
        <begin position="1"/>
        <end position="151"/>
    </location>
</feature>
<feature type="active site" evidence="1">
    <location>
        <position position="50"/>
    </location>
</feature>
<feature type="active site" evidence="1">
    <location>
        <position position="133"/>
    </location>
</feature>
<dbReference type="EC" id="3.2.1.-" evidence="5"/>
<dbReference type="EMBL" id="AL123456">
    <property type="protein sequence ID" value="CCP43843.1"/>
    <property type="molecule type" value="Genomic_DNA"/>
</dbReference>
<dbReference type="RefSeq" id="WP_003900273.1">
    <property type="nucleotide sequence ID" value="NZ_NVQJ01000094.1"/>
</dbReference>
<dbReference type="SMR" id="O53438"/>
<dbReference type="STRING" id="83332.Rv1090"/>
<dbReference type="CAZy" id="GH12">
    <property type="family name" value="Glycoside Hydrolase Family 12"/>
</dbReference>
<dbReference type="PaxDb" id="83332-Rv1090"/>
<dbReference type="KEGG" id="mtv:RVBD_1090"/>
<dbReference type="PATRIC" id="fig|83332.111.peg.1214"/>
<dbReference type="TubercuList" id="Rv1090"/>
<dbReference type="eggNOG" id="COG5297">
    <property type="taxonomic scope" value="Bacteria"/>
</dbReference>
<dbReference type="InParanoid" id="O53438"/>
<dbReference type="PhylomeDB" id="O53438"/>
<dbReference type="Proteomes" id="UP000001584">
    <property type="component" value="Chromosome"/>
</dbReference>
<dbReference type="GO" id="GO:0008810">
    <property type="term" value="F:cellulase activity"/>
    <property type="evidence" value="ECO:0007669"/>
    <property type="project" value="InterPro"/>
</dbReference>
<dbReference type="GO" id="GO:0051275">
    <property type="term" value="P:beta-glucan catabolic process"/>
    <property type="evidence" value="ECO:0000314"/>
    <property type="project" value="MTBBASE"/>
</dbReference>
<dbReference type="FunFam" id="2.60.120.180:FF:000003">
    <property type="entry name" value="Probable cellulase celA2b"/>
    <property type="match status" value="1"/>
</dbReference>
<dbReference type="Gene3D" id="2.60.120.180">
    <property type="match status" value="1"/>
</dbReference>
<dbReference type="InterPro" id="IPR013320">
    <property type="entry name" value="ConA-like_dom_sf"/>
</dbReference>
<dbReference type="InterPro" id="IPR013319">
    <property type="entry name" value="GH11/12"/>
</dbReference>
<dbReference type="InterPro" id="IPR002594">
    <property type="entry name" value="GH12"/>
</dbReference>
<dbReference type="PANTHER" id="PTHR34002">
    <property type="entry name" value="BLR1656 PROTEIN"/>
    <property type="match status" value="1"/>
</dbReference>
<dbReference type="PANTHER" id="PTHR34002:SF9">
    <property type="entry name" value="XYLOGLUCAN-SPECIFIC ENDO-BETA-1,4-GLUCANASE A"/>
    <property type="match status" value="1"/>
</dbReference>
<dbReference type="Pfam" id="PF01670">
    <property type="entry name" value="Glyco_hydro_12"/>
    <property type="match status" value="1"/>
</dbReference>
<dbReference type="SUPFAM" id="SSF49899">
    <property type="entry name" value="Concanavalin A-like lectins/glucanases"/>
    <property type="match status" value="1"/>
</dbReference>
<protein>
    <recommendedName>
        <fullName evidence="4">Probable cellulase Cel12b</fullName>
        <ecNumber evidence="5">3.2.1.-</ecNumber>
    </recommendedName>
</protein>
<organism>
    <name type="scientific">Mycobacterium tuberculosis (strain ATCC 25618 / H37Rv)</name>
    <dbReference type="NCBI Taxonomy" id="83332"/>
    <lineage>
        <taxon>Bacteria</taxon>
        <taxon>Bacillati</taxon>
        <taxon>Actinomycetota</taxon>
        <taxon>Actinomycetes</taxon>
        <taxon>Mycobacteriales</taxon>
        <taxon>Mycobacteriaceae</taxon>
        <taxon>Mycobacterium</taxon>
        <taxon>Mycobacterium tuberculosis complex</taxon>
    </lineage>
</organism>
<accession>O53438</accession>
<accession>F2GGU7</accession>
<accession>I6XX18</accession>
<accession>Q7D8V4</accession>
<reference key="1">
    <citation type="journal article" date="1998" name="Nature">
        <title>Deciphering the biology of Mycobacterium tuberculosis from the complete genome sequence.</title>
        <authorList>
            <person name="Cole S.T."/>
            <person name="Brosch R."/>
            <person name="Parkhill J."/>
            <person name="Garnier T."/>
            <person name="Churcher C.M."/>
            <person name="Harris D.E."/>
            <person name="Gordon S.V."/>
            <person name="Eiglmeier K."/>
            <person name="Gas S."/>
            <person name="Barry C.E. III"/>
            <person name="Tekaia F."/>
            <person name="Badcock K."/>
            <person name="Basham D."/>
            <person name="Brown D."/>
            <person name="Chillingworth T."/>
            <person name="Connor R."/>
            <person name="Davies R.M."/>
            <person name="Devlin K."/>
            <person name="Feltwell T."/>
            <person name="Gentles S."/>
            <person name="Hamlin N."/>
            <person name="Holroyd S."/>
            <person name="Hornsby T."/>
            <person name="Jagels K."/>
            <person name="Krogh A."/>
            <person name="McLean J."/>
            <person name="Moule S."/>
            <person name="Murphy L.D."/>
            <person name="Oliver S."/>
            <person name="Osborne J."/>
            <person name="Quail M.A."/>
            <person name="Rajandream M.A."/>
            <person name="Rogers J."/>
            <person name="Rutter S."/>
            <person name="Seeger K."/>
            <person name="Skelton S."/>
            <person name="Squares S."/>
            <person name="Squares R."/>
            <person name="Sulston J.E."/>
            <person name="Taylor K."/>
            <person name="Whitehead S."/>
            <person name="Barrell B.G."/>
        </authorList>
    </citation>
    <scope>NUCLEOTIDE SEQUENCE [LARGE SCALE GENOMIC DNA]</scope>
    <source>
        <strain>ATCC 25618 / H37Rv</strain>
    </source>
</reference>
<reference key="2">
    <citation type="journal article" date="2011" name="Protein Expr. Purif.">
        <title>Mycobacterium tuberculosis Rv1090 and Rv1987 encode functional beta-glucan-targeting proteins.</title>
        <authorList>
            <person name="Mba Medie F."/>
            <person name="Vincentelli R."/>
            <person name="Drancourt M."/>
            <person name="Henrissat B."/>
        </authorList>
    </citation>
    <scope>FUNCTION</scope>
    <scope>IDENTIFICATION BY MASS SPECTROMETRY</scope>
    <source>
        <strain>H37Rv</strain>
    </source>
</reference>